<name>ENGB_CHRFK</name>
<accession>A0M537</accession>
<proteinExistence type="inferred from homology"/>
<feature type="chain" id="PRO_1000005815" description="Probable GTP-binding protein EngB">
    <location>
        <begin position="1"/>
        <end position="198"/>
    </location>
</feature>
<feature type="domain" description="EngB-type G" evidence="1">
    <location>
        <begin position="22"/>
        <end position="197"/>
    </location>
</feature>
<feature type="binding site" evidence="1">
    <location>
        <begin position="30"/>
        <end position="37"/>
    </location>
    <ligand>
        <name>GTP</name>
        <dbReference type="ChEBI" id="CHEBI:37565"/>
    </ligand>
</feature>
<feature type="binding site" evidence="1">
    <location>
        <position position="37"/>
    </location>
    <ligand>
        <name>Mg(2+)</name>
        <dbReference type="ChEBI" id="CHEBI:18420"/>
    </ligand>
</feature>
<feature type="binding site" evidence="1">
    <location>
        <begin position="57"/>
        <end position="61"/>
    </location>
    <ligand>
        <name>GTP</name>
        <dbReference type="ChEBI" id="CHEBI:37565"/>
    </ligand>
</feature>
<feature type="binding site" evidence="1">
    <location>
        <position position="59"/>
    </location>
    <ligand>
        <name>Mg(2+)</name>
        <dbReference type="ChEBI" id="CHEBI:18420"/>
    </ligand>
</feature>
<feature type="binding site" evidence="1">
    <location>
        <begin position="75"/>
        <end position="78"/>
    </location>
    <ligand>
        <name>GTP</name>
        <dbReference type="ChEBI" id="CHEBI:37565"/>
    </ligand>
</feature>
<feature type="binding site" evidence="1">
    <location>
        <begin position="142"/>
        <end position="145"/>
    </location>
    <ligand>
        <name>GTP</name>
        <dbReference type="ChEBI" id="CHEBI:37565"/>
    </ligand>
</feature>
<feature type="binding site" evidence="1">
    <location>
        <begin position="175"/>
        <end position="178"/>
    </location>
    <ligand>
        <name>GTP</name>
        <dbReference type="ChEBI" id="CHEBI:37565"/>
    </ligand>
</feature>
<sequence>MKIKTAEFVISNSKVDHCPNSTLPEYAFIGRSNVGKSSLINMLTGRKSLAKTSAKPGKTQLINHFLINNNWHLVDLPGYGYAQVSKSTKKVFQKFITAYFKKREQMICAFVLIDSRHKPQPIDMEFMQWLGEHNIPFCIIFTKADKLKPKILDKNIENYKNEMLESWVEMPEYFITSATSKLGQDDILDYIEGINNSI</sequence>
<evidence type="ECO:0000255" key="1">
    <source>
        <dbReference type="HAMAP-Rule" id="MF_00321"/>
    </source>
</evidence>
<reference key="1">
    <citation type="journal article" date="2006" name="Environ. Microbiol.">
        <title>Whole genome analysis of the marine Bacteroidetes'Gramella forsetii' reveals adaptations to degradation of polymeric organic matter.</title>
        <authorList>
            <person name="Bauer M."/>
            <person name="Kube M."/>
            <person name="Teeling H."/>
            <person name="Richter M."/>
            <person name="Lombardot T."/>
            <person name="Allers E."/>
            <person name="Wuerdemann C.A."/>
            <person name="Quast C."/>
            <person name="Kuhl H."/>
            <person name="Knaust F."/>
            <person name="Woebken D."/>
            <person name="Bischof K."/>
            <person name="Mussmann M."/>
            <person name="Choudhuri J.V."/>
            <person name="Meyer F."/>
            <person name="Reinhardt R."/>
            <person name="Amann R.I."/>
            <person name="Gloeckner F.O."/>
        </authorList>
    </citation>
    <scope>NUCLEOTIDE SEQUENCE [LARGE SCALE GENOMIC DNA]</scope>
    <source>
        <strain>DSM 17595 / CGMCC 1.15422 / KT0803</strain>
    </source>
</reference>
<protein>
    <recommendedName>
        <fullName evidence="1">Probable GTP-binding protein EngB</fullName>
    </recommendedName>
</protein>
<dbReference type="EMBL" id="CU207366">
    <property type="protein sequence ID" value="CAL67732.1"/>
    <property type="molecule type" value="Genomic_DNA"/>
</dbReference>
<dbReference type="RefSeq" id="WP_011710635.1">
    <property type="nucleotide sequence ID" value="NC_008571.1"/>
</dbReference>
<dbReference type="SMR" id="A0M537"/>
<dbReference type="STRING" id="411154.GFO_2778"/>
<dbReference type="KEGG" id="gfo:GFO_2778"/>
<dbReference type="eggNOG" id="COG0218">
    <property type="taxonomic scope" value="Bacteria"/>
</dbReference>
<dbReference type="HOGENOM" id="CLU_033732_3_1_10"/>
<dbReference type="OrthoDB" id="9804921at2"/>
<dbReference type="Proteomes" id="UP000000755">
    <property type="component" value="Chromosome"/>
</dbReference>
<dbReference type="GO" id="GO:0005525">
    <property type="term" value="F:GTP binding"/>
    <property type="evidence" value="ECO:0007669"/>
    <property type="project" value="UniProtKB-UniRule"/>
</dbReference>
<dbReference type="GO" id="GO:0046872">
    <property type="term" value="F:metal ion binding"/>
    <property type="evidence" value="ECO:0007669"/>
    <property type="project" value="UniProtKB-KW"/>
</dbReference>
<dbReference type="GO" id="GO:0000917">
    <property type="term" value="P:division septum assembly"/>
    <property type="evidence" value="ECO:0007669"/>
    <property type="project" value="UniProtKB-KW"/>
</dbReference>
<dbReference type="CDD" id="cd01876">
    <property type="entry name" value="YihA_EngB"/>
    <property type="match status" value="1"/>
</dbReference>
<dbReference type="FunFam" id="3.40.50.300:FF:000098">
    <property type="entry name" value="Probable GTP-binding protein EngB"/>
    <property type="match status" value="1"/>
</dbReference>
<dbReference type="Gene3D" id="3.40.50.300">
    <property type="entry name" value="P-loop containing nucleotide triphosphate hydrolases"/>
    <property type="match status" value="1"/>
</dbReference>
<dbReference type="HAMAP" id="MF_00321">
    <property type="entry name" value="GTPase_EngB"/>
    <property type="match status" value="1"/>
</dbReference>
<dbReference type="InterPro" id="IPR030393">
    <property type="entry name" value="G_ENGB_dom"/>
</dbReference>
<dbReference type="InterPro" id="IPR006073">
    <property type="entry name" value="GTP-bd"/>
</dbReference>
<dbReference type="InterPro" id="IPR019987">
    <property type="entry name" value="GTP-bd_ribosome_bio_YsxC"/>
</dbReference>
<dbReference type="InterPro" id="IPR027417">
    <property type="entry name" value="P-loop_NTPase"/>
</dbReference>
<dbReference type="NCBIfam" id="TIGR03598">
    <property type="entry name" value="GTPase_YsxC"/>
    <property type="match status" value="1"/>
</dbReference>
<dbReference type="PANTHER" id="PTHR11649:SF13">
    <property type="entry name" value="ENGB-TYPE G DOMAIN-CONTAINING PROTEIN"/>
    <property type="match status" value="1"/>
</dbReference>
<dbReference type="PANTHER" id="PTHR11649">
    <property type="entry name" value="MSS1/TRME-RELATED GTP-BINDING PROTEIN"/>
    <property type="match status" value="1"/>
</dbReference>
<dbReference type="Pfam" id="PF01926">
    <property type="entry name" value="MMR_HSR1"/>
    <property type="match status" value="1"/>
</dbReference>
<dbReference type="SUPFAM" id="SSF52540">
    <property type="entry name" value="P-loop containing nucleoside triphosphate hydrolases"/>
    <property type="match status" value="1"/>
</dbReference>
<dbReference type="PROSITE" id="PS51706">
    <property type="entry name" value="G_ENGB"/>
    <property type="match status" value="1"/>
</dbReference>
<comment type="function">
    <text evidence="1">Necessary for normal cell division and for the maintenance of normal septation.</text>
</comment>
<comment type="cofactor">
    <cofactor evidence="1">
        <name>Mg(2+)</name>
        <dbReference type="ChEBI" id="CHEBI:18420"/>
    </cofactor>
</comment>
<comment type="similarity">
    <text evidence="1">Belongs to the TRAFAC class TrmE-Era-EngA-EngB-Septin-like GTPase superfamily. EngB GTPase family.</text>
</comment>
<gene>
    <name evidence="1" type="primary">engB</name>
    <name type="ordered locus">GFO_2778</name>
</gene>
<organism>
    <name type="scientific">Christiangramia forsetii (strain DSM 17595 / CGMCC 1.15422 / KT0803)</name>
    <name type="common">Gramella forsetii</name>
    <dbReference type="NCBI Taxonomy" id="411154"/>
    <lineage>
        <taxon>Bacteria</taxon>
        <taxon>Pseudomonadati</taxon>
        <taxon>Bacteroidota</taxon>
        <taxon>Flavobacteriia</taxon>
        <taxon>Flavobacteriales</taxon>
        <taxon>Flavobacteriaceae</taxon>
        <taxon>Christiangramia</taxon>
    </lineage>
</organism>
<keyword id="KW-0131">Cell cycle</keyword>
<keyword id="KW-0132">Cell division</keyword>
<keyword id="KW-0342">GTP-binding</keyword>
<keyword id="KW-0460">Magnesium</keyword>
<keyword id="KW-0479">Metal-binding</keyword>
<keyword id="KW-0547">Nucleotide-binding</keyword>
<keyword id="KW-0717">Septation</keyword>